<reference key="1">
    <citation type="journal article" date="2006" name="Nat. Biotechnol.">
        <title>Complete genome sequence of the entomopathogenic and metabolically versatile soil bacterium Pseudomonas entomophila.</title>
        <authorList>
            <person name="Vodovar N."/>
            <person name="Vallenet D."/>
            <person name="Cruveiller S."/>
            <person name="Rouy Z."/>
            <person name="Barbe V."/>
            <person name="Acosta C."/>
            <person name="Cattolico L."/>
            <person name="Jubin C."/>
            <person name="Lajus A."/>
            <person name="Segurens B."/>
            <person name="Vacherie B."/>
            <person name="Wincker P."/>
            <person name="Weissenbach J."/>
            <person name="Lemaitre B."/>
            <person name="Medigue C."/>
            <person name="Boccard F."/>
        </authorList>
    </citation>
    <scope>NUCLEOTIDE SEQUENCE [LARGE SCALE GENOMIC DNA]</scope>
    <source>
        <strain>L48</strain>
    </source>
</reference>
<evidence type="ECO:0000255" key="1">
    <source>
        <dbReference type="HAMAP-Rule" id="MF_01844"/>
    </source>
</evidence>
<name>NHAA_PSEE4</name>
<keyword id="KW-0050">Antiport</keyword>
<keyword id="KW-0997">Cell inner membrane</keyword>
<keyword id="KW-1003">Cell membrane</keyword>
<keyword id="KW-0406">Ion transport</keyword>
<keyword id="KW-0472">Membrane</keyword>
<keyword id="KW-0915">Sodium</keyword>
<keyword id="KW-0739">Sodium transport</keyword>
<keyword id="KW-0812">Transmembrane</keyword>
<keyword id="KW-1133">Transmembrane helix</keyword>
<keyword id="KW-0813">Transport</keyword>
<sequence length="400" mass="41632">MNAPLHPLKQPSMLRQLLATEAAGGVLLMFTAALAIIIANSPWASAYQHLLHLPVGPVLTDKLGPMTVHMWINDGLMAIFFLLVGLEIKRELVDGRLASWEQRRLPALPALMGMAVPALIYLAVSRGELGLAGGWAIPAATDIAFAVGALALLGKHAPLSLKVMLVSVAIIDDMGAVAIIAVFYTSSINLLALAGAAGIVAVLLAFNRLRVVALWPYLIGVAALWYVTLLSGVHATIAGVVGALLIPYSAGSGAEREASPLLKLEHGLAPWVGFLIVPAFGFANAGVSFGDLGWSDIFAPLPLAIALGLLLGKQLGVFAGVLLAVKSGLASKPRGASWLQIYGVAMLCGIGFTMSLFIGELAFPGQPEKIDAAKIGILLGSLLSAVIACVILRFAPKQAD</sequence>
<protein>
    <recommendedName>
        <fullName evidence="1">Na(+)/H(+) antiporter NhaA</fullName>
    </recommendedName>
    <alternativeName>
        <fullName evidence="1">Sodium/proton antiporter NhaA</fullName>
    </alternativeName>
</protein>
<organism>
    <name type="scientific">Pseudomonas entomophila (strain L48)</name>
    <dbReference type="NCBI Taxonomy" id="384676"/>
    <lineage>
        <taxon>Bacteria</taxon>
        <taxon>Pseudomonadati</taxon>
        <taxon>Pseudomonadota</taxon>
        <taxon>Gammaproteobacteria</taxon>
        <taxon>Pseudomonadales</taxon>
        <taxon>Pseudomonadaceae</taxon>
        <taxon>Pseudomonas</taxon>
    </lineage>
</organism>
<proteinExistence type="inferred from homology"/>
<gene>
    <name evidence="1" type="primary">nhaA</name>
    <name type="ordered locus">PSEEN3445</name>
</gene>
<dbReference type="EMBL" id="CT573326">
    <property type="protein sequence ID" value="CAK16192.1"/>
    <property type="molecule type" value="Genomic_DNA"/>
</dbReference>
<dbReference type="RefSeq" id="WP_011534579.1">
    <property type="nucleotide sequence ID" value="NC_008027.1"/>
</dbReference>
<dbReference type="SMR" id="Q1I836"/>
<dbReference type="STRING" id="384676.PSEEN3445"/>
<dbReference type="GeneID" id="32806522"/>
<dbReference type="KEGG" id="pen:PSEEN3445"/>
<dbReference type="eggNOG" id="COG3004">
    <property type="taxonomic scope" value="Bacteria"/>
</dbReference>
<dbReference type="HOGENOM" id="CLU_015803_0_0_6"/>
<dbReference type="OrthoDB" id="9808135at2"/>
<dbReference type="Proteomes" id="UP000000658">
    <property type="component" value="Chromosome"/>
</dbReference>
<dbReference type="GO" id="GO:0005886">
    <property type="term" value="C:plasma membrane"/>
    <property type="evidence" value="ECO:0007669"/>
    <property type="project" value="UniProtKB-SubCell"/>
</dbReference>
<dbReference type="GO" id="GO:0015385">
    <property type="term" value="F:sodium:proton antiporter activity"/>
    <property type="evidence" value="ECO:0007669"/>
    <property type="project" value="TreeGrafter"/>
</dbReference>
<dbReference type="GO" id="GO:0006885">
    <property type="term" value="P:regulation of pH"/>
    <property type="evidence" value="ECO:0007669"/>
    <property type="project" value="InterPro"/>
</dbReference>
<dbReference type="Gene3D" id="1.20.1530.10">
    <property type="entry name" value="Na+/H+ antiporter like domain"/>
    <property type="match status" value="1"/>
</dbReference>
<dbReference type="HAMAP" id="MF_01844">
    <property type="entry name" value="NhaA"/>
    <property type="match status" value="1"/>
</dbReference>
<dbReference type="InterPro" id="IPR023171">
    <property type="entry name" value="Na/H_antiporter_dom_sf"/>
</dbReference>
<dbReference type="InterPro" id="IPR004670">
    <property type="entry name" value="NhaA"/>
</dbReference>
<dbReference type="NCBIfam" id="TIGR00773">
    <property type="entry name" value="NhaA"/>
    <property type="match status" value="1"/>
</dbReference>
<dbReference type="NCBIfam" id="NF007111">
    <property type="entry name" value="PRK09560.1"/>
    <property type="match status" value="1"/>
</dbReference>
<dbReference type="NCBIfam" id="NF007112">
    <property type="entry name" value="PRK09561.1"/>
    <property type="match status" value="1"/>
</dbReference>
<dbReference type="PANTHER" id="PTHR30341:SF0">
    <property type="entry name" value="NA(+)_H(+) ANTIPORTER NHAA"/>
    <property type="match status" value="1"/>
</dbReference>
<dbReference type="PANTHER" id="PTHR30341">
    <property type="entry name" value="SODIUM ION/PROTON ANTIPORTER NHAA-RELATED"/>
    <property type="match status" value="1"/>
</dbReference>
<dbReference type="Pfam" id="PF06965">
    <property type="entry name" value="Na_H_antiport_1"/>
    <property type="match status" value="1"/>
</dbReference>
<feature type="chain" id="PRO_0000334367" description="Na(+)/H(+) antiporter NhaA">
    <location>
        <begin position="1"/>
        <end position="400"/>
    </location>
</feature>
<feature type="transmembrane region" description="Helical" evidence="1">
    <location>
        <begin position="18"/>
        <end position="38"/>
    </location>
</feature>
<feature type="transmembrane region" description="Helical" evidence="1">
    <location>
        <begin position="68"/>
        <end position="88"/>
    </location>
</feature>
<feature type="transmembrane region" description="Helical" evidence="1">
    <location>
        <begin position="105"/>
        <end position="125"/>
    </location>
</feature>
<feature type="transmembrane region" description="Helical" evidence="1">
    <location>
        <begin position="133"/>
        <end position="153"/>
    </location>
</feature>
<feature type="transmembrane region" description="Helical" evidence="1">
    <location>
        <begin position="163"/>
        <end position="183"/>
    </location>
</feature>
<feature type="transmembrane region" description="Helical" evidence="1">
    <location>
        <begin position="186"/>
        <end position="206"/>
    </location>
</feature>
<feature type="transmembrane region" description="Helical" evidence="1">
    <location>
        <begin position="211"/>
        <end position="231"/>
    </location>
</feature>
<feature type="transmembrane region" description="Helical" evidence="1">
    <location>
        <begin position="232"/>
        <end position="252"/>
    </location>
</feature>
<feature type="transmembrane region" description="Helical" evidence="1">
    <location>
        <begin position="267"/>
        <end position="287"/>
    </location>
</feature>
<feature type="transmembrane region" description="Helical" evidence="1">
    <location>
        <begin position="305"/>
        <end position="325"/>
    </location>
</feature>
<feature type="transmembrane region" description="Helical" evidence="1">
    <location>
        <begin position="338"/>
        <end position="358"/>
    </location>
</feature>
<feature type="transmembrane region" description="Helical" evidence="1">
    <location>
        <begin position="372"/>
        <end position="392"/>
    </location>
</feature>
<comment type="function">
    <text evidence="1">Na(+)/H(+) antiporter that extrudes sodium in exchange for external protons.</text>
</comment>
<comment type="catalytic activity">
    <reaction evidence="1">
        <text>Na(+)(in) + 2 H(+)(out) = Na(+)(out) + 2 H(+)(in)</text>
        <dbReference type="Rhea" id="RHEA:29251"/>
        <dbReference type="ChEBI" id="CHEBI:15378"/>
        <dbReference type="ChEBI" id="CHEBI:29101"/>
    </reaction>
    <physiologicalReaction direction="left-to-right" evidence="1">
        <dbReference type="Rhea" id="RHEA:29252"/>
    </physiologicalReaction>
</comment>
<comment type="subcellular location">
    <subcellularLocation>
        <location evidence="1">Cell inner membrane</location>
        <topology evidence="1">Multi-pass membrane protein</topology>
    </subcellularLocation>
</comment>
<comment type="similarity">
    <text evidence="1">Belongs to the NhaA Na(+)/H(+) (TC 2.A.33) antiporter family.</text>
</comment>
<accession>Q1I836</accession>